<comment type="function">
    <text evidence="2 3">Involved in several stages of intracellular trafficking. Interacts with membranes phosphatidylinositol 3,4-bisphosphate and/or phosphatidylinositol 4,5-bisphosphate (Probable). Acts in part as component of the retromer membrane-deforming SNX-BAR subcomplex. The SNX-BAR retromer mediates retrograde transport of cargo proteins from endosomes to the trans-Golgi network (TGN) and is involved in endosome-to-plasma membrane transport for cargo protein recycling. The SNX-BAR subcomplex functions to deform the donor membrane into a tubular profile called endosome-to-TGN transport carrier (ETC). Does not have in vitro vesicle-to-membrane remodeling activity. Involved in retrograde endosome-to-TGN transport of lysosomal enzyme receptor IGF2R. May function as link between transport vesicles and dynactin. Negatively regulates retrograde transport of BACE1 from the cell surface to the trans-Golgi network. Involved in E-cadherin sorting and degradation; inhibits PIP5K1C-mediated E-cadherin degradation. In association with GIT1 involved in EGFR degradation. Promotes lysosomal degradation of CDKN1B. May contribute to transcription regulation (By similarity).</text>
</comment>
<comment type="subunit">
    <text evidence="2 3">Forms heterodimers with BAR domain-containing sorting nexins SNX1 and SNX2. The heterodimers are proposed to self-assemble into helical arrays on the membrane to stabilize and expand local membrane curvature underlying endosomal tubule formation. Thought to be a component of the originally described retromer complex (also called SNX-BAR retromer) which is a pentamer containing the heterotrimeric retromer cargo-selective complex (CSC), also described as vacuolar protein sorting subcomplex (VPS), and a heterodimeric membrane-deforming subcomplex formed between SNX1 or SNX2 and SNX5 or SNX6 (also called SNX-BAR subcomplex); the respective CSC and SNX-BAR subcomplexes associate with low affinity. Interacts with SNX1, SNX2, VPS26A, VPS29, VPS35, TGFB receptors, BACE1, BRMS1, PIP5K1C. Interacts with DCTN1; the association with DCTN1 is involved in movement of retromer-c ontaining vesicles toward the TGN. Interacts with PIM1; translocating SNX6 to the nucleus. Interacts with CDKN1B and GIT1.</text>
</comment>
<comment type="subcellular location">
    <subcellularLocation>
        <location evidence="3">Early endosome membrane</location>
        <topology evidence="3">Peripheral membrane protein</topology>
        <orientation evidence="3">Cytoplasmic side</orientation>
    </subcellularLocation>
    <subcellularLocation>
        <location evidence="3">Cytoplasmic vesicle</location>
    </subcellularLocation>
    <subcellularLocation>
        <location evidence="3">Cytoplasm</location>
    </subcellularLocation>
    <subcellularLocation>
        <location evidence="3">Nucleus</location>
    </subcellularLocation>
    <text evidence="3">Interaction with SNX1 or SNX2 promotes location at endosome membranes (By similarity). Only a minor proportion is seen in the nucleus (By similarity).</text>
</comment>
<comment type="domain">
    <text evidence="1">The PX domain mediates interaction with membranes enriched in phosphatidylinositol 3,4-bisphosphate and/or phosphatidylinositol 4,5-bisphosphate.</text>
</comment>
<comment type="PTM">
    <text evidence="3">In vitro phosphorylated by PIM1; not affecting PIM1-dependent nuclear translocation (By similarity).</text>
</comment>
<comment type="similarity">
    <text evidence="5">Belongs to the sorting nexin family.</text>
</comment>
<protein>
    <recommendedName>
        <fullName>Sorting nexin-6</fullName>
    </recommendedName>
    <component>
        <recommendedName>
            <fullName>Sorting nexin-6, N-terminally processed</fullName>
        </recommendedName>
    </component>
</protein>
<organism>
    <name type="scientific">Pongo abelii</name>
    <name type="common">Sumatran orangutan</name>
    <name type="synonym">Pongo pygmaeus abelii</name>
    <dbReference type="NCBI Taxonomy" id="9601"/>
    <lineage>
        <taxon>Eukaryota</taxon>
        <taxon>Metazoa</taxon>
        <taxon>Chordata</taxon>
        <taxon>Craniata</taxon>
        <taxon>Vertebrata</taxon>
        <taxon>Euteleostomi</taxon>
        <taxon>Mammalia</taxon>
        <taxon>Eutheria</taxon>
        <taxon>Euarchontoglires</taxon>
        <taxon>Primates</taxon>
        <taxon>Haplorrhini</taxon>
        <taxon>Catarrhini</taxon>
        <taxon>Hominidae</taxon>
        <taxon>Pongo</taxon>
    </lineage>
</organism>
<dbReference type="EMBL" id="CR860687">
    <property type="protein sequence ID" value="CAH92803.1"/>
    <property type="molecule type" value="mRNA"/>
</dbReference>
<dbReference type="RefSeq" id="NP_001126635.1">
    <property type="nucleotide sequence ID" value="NM_001133163.1"/>
</dbReference>
<dbReference type="SMR" id="Q5R613"/>
<dbReference type="FunCoup" id="Q5R613">
    <property type="interactions" value="2575"/>
</dbReference>
<dbReference type="STRING" id="9601.ENSPPYP00000006518"/>
<dbReference type="GeneID" id="100173633"/>
<dbReference type="KEGG" id="pon:100173633"/>
<dbReference type="CTD" id="58533"/>
<dbReference type="eggNOG" id="KOG1660">
    <property type="taxonomic scope" value="Eukaryota"/>
</dbReference>
<dbReference type="InParanoid" id="Q5R613"/>
<dbReference type="OrthoDB" id="9976382at2759"/>
<dbReference type="Proteomes" id="UP000001595">
    <property type="component" value="Unplaced"/>
</dbReference>
<dbReference type="GO" id="GO:0005829">
    <property type="term" value="C:cytosol"/>
    <property type="evidence" value="ECO:0007669"/>
    <property type="project" value="GOC"/>
</dbReference>
<dbReference type="GO" id="GO:0031901">
    <property type="term" value="C:early endosome membrane"/>
    <property type="evidence" value="ECO:0000250"/>
    <property type="project" value="UniProtKB"/>
</dbReference>
<dbReference type="GO" id="GO:0005634">
    <property type="term" value="C:nucleus"/>
    <property type="evidence" value="ECO:0007669"/>
    <property type="project" value="UniProtKB-SubCell"/>
</dbReference>
<dbReference type="GO" id="GO:0030904">
    <property type="term" value="C:retromer complex"/>
    <property type="evidence" value="ECO:0000250"/>
    <property type="project" value="UniProtKB"/>
</dbReference>
<dbReference type="GO" id="GO:0097422">
    <property type="term" value="C:tubular endosome"/>
    <property type="evidence" value="ECO:0000250"/>
    <property type="project" value="UniProtKB"/>
</dbReference>
<dbReference type="GO" id="GO:0034452">
    <property type="term" value="F:dynactin binding"/>
    <property type="evidence" value="ECO:0000250"/>
    <property type="project" value="UniProtKB"/>
</dbReference>
<dbReference type="GO" id="GO:0035091">
    <property type="term" value="F:phosphatidylinositol binding"/>
    <property type="evidence" value="ECO:0007669"/>
    <property type="project" value="InterPro"/>
</dbReference>
<dbReference type="GO" id="GO:0006886">
    <property type="term" value="P:intracellular protein transport"/>
    <property type="evidence" value="ECO:0000250"/>
    <property type="project" value="UniProtKB"/>
</dbReference>
<dbReference type="GO" id="GO:0042147">
    <property type="term" value="P:retrograde transport, endosome to Golgi"/>
    <property type="evidence" value="ECO:0000250"/>
    <property type="project" value="UniProtKB"/>
</dbReference>
<dbReference type="CDD" id="cd07662">
    <property type="entry name" value="BAR_SNX6"/>
    <property type="match status" value="1"/>
</dbReference>
<dbReference type="CDD" id="cd07292">
    <property type="entry name" value="PX_SNX6"/>
    <property type="match status" value="1"/>
</dbReference>
<dbReference type="FunFam" id="1.20.1270.60:FF:000008">
    <property type="entry name" value="Sorting nexin"/>
    <property type="match status" value="1"/>
</dbReference>
<dbReference type="FunFam" id="3.30.1520.10:FF:000001">
    <property type="entry name" value="Sorting nexin"/>
    <property type="match status" value="1"/>
</dbReference>
<dbReference type="Gene3D" id="1.20.1270.60">
    <property type="entry name" value="Arfaptin homology (AH) domain/BAR domain"/>
    <property type="match status" value="1"/>
</dbReference>
<dbReference type="Gene3D" id="3.30.1520.10">
    <property type="entry name" value="Phox-like domain"/>
    <property type="match status" value="1"/>
</dbReference>
<dbReference type="InterPro" id="IPR027267">
    <property type="entry name" value="AH/BAR_dom_sf"/>
</dbReference>
<dbReference type="InterPro" id="IPR028657">
    <property type="entry name" value="BAR_SNX6"/>
</dbReference>
<dbReference type="InterPro" id="IPR001683">
    <property type="entry name" value="PX_dom"/>
</dbReference>
<dbReference type="InterPro" id="IPR036871">
    <property type="entry name" value="PX_dom_sf"/>
</dbReference>
<dbReference type="InterPro" id="IPR042136">
    <property type="entry name" value="PX_SNX6"/>
</dbReference>
<dbReference type="InterPro" id="IPR014637">
    <property type="entry name" value="SNX5/SNX6/SNX32"/>
</dbReference>
<dbReference type="InterPro" id="IPR015404">
    <property type="entry name" value="Vps5_C"/>
</dbReference>
<dbReference type="PANTHER" id="PTHR45850">
    <property type="entry name" value="SORTING NEXIN FAMILY MEMBER"/>
    <property type="match status" value="1"/>
</dbReference>
<dbReference type="PANTHER" id="PTHR45850:SF4">
    <property type="entry name" value="SORTING NEXIN-6"/>
    <property type="match status" value="1"/>
</dbReference>
<dbReference type="Pfam" id="PF00787">
    <property type="entry name" value="PX"/>
    <property type="match status" value="1"/>
</dbReference>
<dbReference type="Pfam" id="PF09325">
    <property type="entry name" value="Vps5"/>
    <property type="match status" value="1"/>
</dbReference>
<dbReference type="PIRSF" id="PIRSF036924">
    <property type="entry name" value="Snx5_Snx6"/>
    <property type="match status" value="1"/>
</dbReference>
<dbReference type="SUPFAM" id="SSF103657">
    <property type="entry name" value="BAR/IMD domain-like"/>
    <property type="match status" value="1"/>
</dbReference>
<dbReference type="SUPFAM" id="SSF64268">
    <property type="entry name" value="PX domain"/>
    <property type="match status" value="1"/>
</dbReference>
<dbReference type="PROSITE" id="PS50195">
    <property type="entry name" value="PX"/>
    <property type="match status" value="1"/>
</dbReference>
<keyword id="KW-0007">Acetylation</keyword>
<keyword id="KW-0963">Cytoplasm</keyword>
<keyword id="KW-0968">Cytoplasmic vesicle</keyword>
<keyword id="KW-0967">Endosome</keyword>
<keyword id="KW-0446">Lipid-binding</keyword>
<keyword id="KW-0472">Membrane</keyword>
<keyword id="KW-0539">Nucleus</keyword>
<keyword id="KW-0597">Phosphoprotein</keyword>
<keyword id="KW-0653">Protein transport</keyword>
<keyword id="KW-1185">Reference proteome</keyword>
<keyword id="KW-0813">Transport</keyword>
<gene>
    <name type="primary">SNX6</name>
</gene>
<reference key="1">
    <citation type="submission" date="2004-11" db="EMBL/GenBank/DDBJ databases">
        <authorList>
            <consortium name="The German cDNA consortium"/>
        </authorList>
    </citation>
    <scope>NUCLEOTIDE SEQUENCE [LARGE SCALE MRNA]</scope>
    <source>
        <tissue>Brain cortex</tissue>
    </source>
</reference>
<sequence length="406" mass="46621">MMEGLDDGPDFLSEEDRGLKAINVDLQSDAALQVDISDALSERDKVKFTVHTKSSLPNFKQNEFSVVRQHEEFIWLHDSFVENEDYAGYIIPPAPPRPDFDASREKLQKLGEGEGSMTKEEFTKMKQELEAEYLAIFKKTVAMHEVFLCRVAAHPILRKDLNFHVFLEYNQDLSVRGKNKKEKLEDFFKNMVKSADGVIVSGVKDVDDFFEHERTFLLEYHNRVKDASAKSDRMTRSHKSAADDYNRIGSSLYALGTQDSTDICKFFLKVSELFDKTRKIEARVSADEDLKLSDLLKYYLRESQAAKDLLYRRSRSLVDYENANKALDKARAKNKDVLQAETSQQLCCQKFEKISESAKQELIDFKTRRVAAFRKNLVELAELELKHAKGNLQLLQNCLAVLNGDT</sequence>
<evidence type="ECO:0000250" key="1">
    <source>
        <dbReference type="UniProtKB" id="B1H267"/>
    </source>
</evidence>
<evidence type="ECO:0000250" key="2">
    <source>
        <dbReference type="UniProtKB" id="Q6P8X1"/>
    </source>
</evidence>
<evidence type="ECO:0000250" key="3">
    <source>
        <dbReference type="UniProtKB" id="Q9UNH7"/>
    </source>
</evidence>
<evidence type="ECO:0000255" key="4">
    <source>
        <dbReference type="PROSITE-ProRule" id="PRU00147"/>
    </source>
</evidence>
<evidence type="ECO:0000305" key="5"/>
<name>SNX6_PONAB</name>
<proteinExistence type="evidence at transcript level"/>
<accession>Q5R613</accession>
<feature type="chain" id="PRO_0000423279" description="Sorting nexin-6">
    <location>
        <begin position="1"/>
        <end position="406"/>
    </location>
</feature>
<feature type="initiator methionine" description="Removed; alternate" evidence="3">
    <location>
        <position position="1"/>
    </location>
</feature>
<feature type="chain" id="PRO_0000213847" description="Sorting nexin-6, N-terminally processed">
    <location>
        <begin position="2"/>
        <end position="406"/>
    </location>
</feature>
<feature type="domain" description="PX" evidence="4">
    <location>
        <begin position="26"/>
        <end position="173"/>
    </location>
</feature>
<feature type="domain" description="BAR" evidence="5">
    <location>
        <begin position="203"/>
        <end position="406"/>
    </location>
</feature>
<feature type="region of interest" description="Interaction with PIM1" evidence="3">
    <location>
        <begin position="2"/>
        <end position="179"/>
    </location>
</feature>
<feature type="region of interest" description="Membrane-binding amphipathic helix" evidence="3">
    <location>
        <begin position="182"/>
        <end position="199"/>
    </location>
</feature>
<feature type="binding site" evidence="1">
    <location>
        <begin position="41"/>
        <end position="47"/>
    </location>
    <ligand>
        <name>a 1,2-diacyl-sn-glycero-3-phospho-(1D-myo-inositol-4,5-bisphosphate)</name>
        <dbReference type="ChEBI" id="CHEBI:58456"/>
    </ligand>
</feature>
<feature type="binding site" evidence="1">
    <location>
        <begin position="100"/>
        <end position="106"/>
    </location>
    <ligand>
        <name>a 1,2-diacyl-sn-glycero-3-phospho-(1D-myo-inositol-4,5-bisphosphate)</name>
        <dbReference type="ChEBI" id="CHEBI:58456"/>
    </ligand>
</feature>
<feature type="binding site" evidence="1">
    <location>
        <begin position="114"/>
        <end position="117"/>
    </location>
    <ligand>
        <name>a 1,2-diacyl-sn-glycero-3-phospho-(1D-myo-inositol-4,5-bisphosphate)</name>
        <dbReference type="ChEBI" id="CHEBI:58456"/>
    </ligand>
</feature>
<feature type="modified residue" description="N-acetylmethionine" evidence="3">
    <location>
        <position position="1"/>
    </location>
</feature>
<feature type="modified residue" description="N-acetylmethionine; in Sorting nexin-6, N-terminally processed" evidence="3">
    <location>
        <position position="2"/>
    </location>
</feature>
<feature type="modified residue" description="Phosphoserine" evidence="3">
    <location>
        <position position="116"/>
    </location>
</feature>
<feature type="modified residue" description="Phosphoserine" evidence="3">
    <location>
        <position position="194"/>
    </location>
</feature>